<keyword id="KW-0963">Cytoplasm</keyword>
<keyword id="KW-0227">DNA damage</keyword>
<keyword id="KW-0234">DNA repair</keyword>
<keyword id="KW-0378">Hydrolase</keyword>
<accession>B8ZQ48</accession>
<organism>
    <name type="scientific">Streptococcus pneumoniae (strain ATCC 700669 / Spain 23F-1)</name>
    <dbReference type="NCBI Taxonomy" id="561276"/>
    <lineage>
        <taxon>Bacteria</taxon>
        <taxon>Bacillati</taxon>
        <taxon>Bacillota</taxon>
        <taxon>Bacilli</taxon>
        <taxon>Lactobacillales</taxon>
        <taxon>Streptococcaceae</taxon>
        <taxon>Streptococcus</taxon>
    </lineage>
</organism>
<comment type="function">
    <text evidence="1">Excises uracil residues from the DNA which can arise as a result of misincorporation of dUMP residues by DNA polymerase or due to deamination of cytosine.</text>
</comment>
<comment type="catalytic activity">
    <reaction evidence="1">
        <text>Hydrolyzes single-stranded DNA or mismatched double-stranded DNA and polynucleotides, releasing free uracil.</text>
        <dbReference type="EC" id="3.2.2.27"/>
    </reaction>
</comment>
<comment type="subcellular location">
    <subcellularLocation>
        <location evidence="1">Cytoplasm</location>
    </subcellularLocation>
</comment>
<comment type="similarity">
    <text evidence="1">Belongs to the uracil-DNA glycosylase (UDG) superfamily. UNG family.</text>
</comment>
<name>UNG_STRPJ</name>
<proteinExistence type="inferred from homology"/>
<feature type="chain" id="PRO_1000199797" description="Uracil-DNA glycosylase">
    <location>
        <begin position="1"/>
        <end position="217"/>
    </location>
</feature>
<feature type="active site" description="Proton acceptor" evidence="1">
    <location>
        <position position="62"/>
    </location>
</feature>
<gene>
    <name evidence="1" type="primary">ung</name>
    <name type="ordered locus">SPN23F10720</name>
</gene>
<evidence type="ECO:0000255" key="1">
    <source>
        <dbReference type="HAMAP-Rule" id="MF_00148"/>
    </source>
</evidence>
<dbReference type="EC" id="3.2.2.27" evidence="1"/>
<dbReference type="EMBL" id="FM211187">
    <property type="protein sequence ID" value="CAR68887.1"/>
    <property type="molecule type" value="Genomic_DNA"/>
</dbReference>
<dbReference type="RefSeq" id="WP_000401326.1">
    <property type="nucleotide sequence ID" value="NC_011900.1"/>
</dbReference>
<dbReference type="SMR" id="B8ZQ48"/>
<dbReference type="KEGG" id="sne:SPN23F10720"/>
<dbReference type="HOGENOM" id="CLU_032162_3_1_9"/>
<dbReference type="GO" id="GO:0005737">
    <property type="term" value="C:cytoplasm"/>
    <property type="evidence" value="ECO:0007669"/>
    <property type="project" value="UniProtKB-SubCell"/>
</dbReference>
<dbReference type="GO" id="GO:0004844">
    <property type="term" value="F:uracil DNA N-glycosylase activity"/>
    <property type="evidence" value="ECO:0007669"/>
    <property type="project" value="UniProtKB-UniRule"/>
</dbReference>
<dbReference type="GO" id="GO:0097510">
    <property type="term" value="P:base-excision repair, AP site formation via deaminated base removal"/>
    <property type="evidence" value="ECO:0007669"/>
    <property type="project" value="TreeGrafter"/>
</dbReference>
<dbReference type="CDD" id="cd10027">
    <property type="entry name" value="UDG-F1-like"/>
    <property type="match status" value="1"/>
</dbReference>
<dbReference type="FunFam" id="3.40.470.10:FF:000008">
    <property type="entry name" value="Uracil-DNA glycosylase"/>
    <property type="match status" value="1"/>
</dbReference>
<dbReference type="Gene3D" id="3.40.470.10">
    <property type="entry name" value="Uracil-DNA glycosylase-like domain"/>
    <property type="match status" value="1"/>
</dbReference>
<dbReference type="HAMAP" id="MF_00148">
    <property type="entry name" value="UDG"/>
    <property type="match status" value="1"/>
</dbReference>
<dbReference type="InterPro" id="IPR002043">
    <property type="entry name" value="UDG_fam1"/>
</dbReference>
<dbReference type="InterPro" id="IPR018085">
    <property type="entry name" value="Ura-DNA_Glyclase_AS"/>
</dbReference>
<dbReference type="InterPro" id="IPR005122">
    <property type="entry name" value="Uracil-DNA_glycosylase-like"/>
</dbReference>
<dbReference type="InterPro" id="IPR036895">
    <property type="entry name" value="Uracil-DNA_glycosylase-like_sf"/>
</dbReference>
<dbReference type="NCBIfam" id="NF003588">
    <property type="entry name" value="PRK05254.1-1"/>
    <property type="match status" value="1"/>
</dbReference>
<dbReference type="NCBIfam" id="NF003589">
    <property type="entry name" value="PRK05254.1-2"/>
    <property type="match status" value="1"/>
</dbReference>
<dbReference type="NCBIfam" id="NF003591">
    <property type="entry name" value="PRK05254.1-4"/>
    <property type="match status" value="1"/>
</dbReference>
<dbReference type="NCBIfam" id="NF003592">
    <property type="entry name" value="PRK05254.1-5"/>
    <property type="match status" value="1"/>
</dbReference>
<dbReference type="NCBIfam" id="TIGR00628">
    <property type="entry name" value="ung"/>
    <property type="match status" value="1"/>
</dbReference>
<dbReference type="PANTHER" id="PTHR11264">
    <property type="entry name" value="URACIL-DNA GLYCOSYLASE"/>
    <property type="match status" value="1"/>
</dbReference>
<dbReference type="PANTHER" id="PTHR11264:SF0">
    <property type="entry name" value="URACIL-DNA GLYCOSYLASE"/>
    <property type="match status" value="1"/>
</dbReference>
<dbReference type="Pfam" id="PF03167">
    <property type="entry name" value="UDG"/>
    <property type="match status" value="1"/>
</dbReference>
<dbReference type="SMART" id="SM00986">
    <property type="entry name" value="UDG"/>
    <property type="match status" value="1"/>
</dbReference>
<dbReference type="SMART" id="SM00987">
    <property type="entry name" value="UreE_C"/>
    <property type="match status" value="1"/>
</dbReference>
<dbReference type="SUPFAM" id="SSF52141">
    <property type="entry name" value="Uracil-DNA glycosylase-like"/>
    <property type="match status" value="1"/>
</dbReference>
<dbReference type="PROSITE" id="PS00130">
    <property type="entry name" value="U_DNA_GLYCOSYLASE"/>
    <property type="match status" value="1"/>
</dbReference>
<protein>
    <recommendedName>
        <fullName evidence="1">Uracil-DNA glycosylase</fullName>
        <shortName evidence="1">UDG</shortName>
        <ecNumber evidence="1">3.2.2.27</ecNumber>
    </recommendedName>
</protein>
<sequence length="217" mass="24050">MEHSSWHALIKAQLPEGYFGKINQFMEQVYSQGIIYPPKEKVFQALLTTLLEEVKVVILGQDPYHGPGQAQGLSFSVPDSIPAPPSLQNILKELSDDIGVKKSHDLTAWAEQGVLLLNACLTVPAGQANGHAGQIWEPFTDAVIQVVNHLDRPVVFVLWGAYARKKKALVTNPHHLIIESAHPSPLSVYRGFWGSKPFSKANAFLKETGQEPIDWLR</sequence>
<reference key="1">
    <citation type="journal article" date="2009" name="J. Bacteriol.">
        <title>Role of conjugative elements in the evolution of the multidrug-resistant pandemic clone Streptococcus pneumoniae Spain23F ST81.</title>
        <authorList>
            <person name="Croucher N.J."/>
            <person name="Walker D."/>
            <person name="Romero P."/>
            <person name="Lennard N."/>
            <person name="Paterson G.K."/>
            <person name="Bason N.C."/>
            <person name="Mitchell A.M."/>
            <person name="Quail M.A."/>
            <person name="Andrew P.W."/>
            <person name="Parkhill J."/>
            <person name="Bentley S.D."/>
            <person name="Mitchell T.J."/>
        </authorList>
    </citation>
    <scope>NUCLEOTIDE SEQUENCE [LARGE SCALE GENOMIC DNA]</scope>
    <source>
        <strain>ATCC 700669 / Spain 23F-1</strain>
    </source>
</reference>